<comment type="interaction">
    <interactant intactId="EBI-5235829">
        <id>Q8IWZ5</id>
    </interactant>
    <interactant intactId="EBI-10173507">
        <id>Q6UY14-3</id>
        <label>ADAMTSL4</label>
    </interactant>
    <organismsDiffer>false</organismsDiffer>
    <experiments>3</experiments>
</comment>
<comment type="interaction">
    <interactant intactId="EBI-5235829">
        <id>Q8IWZ5</id>
    </interactant>
    <interactant intactId="EBI-8643161">
        <id>Q9NX04</id>
        <label>AIRIM</label>
    </interactant>
    <organismsDiffer>false</organismsDiffer>
    <experiments>3</experiments>
</comment>
<comment type="interaction">
    <interactant intactId="EBI-5235829">
        <id>Q8IWZ5</id>
    </interactant>
    <interactant intactId="EBI-745213">
        <id>P29972</id>
        <label>AQP1</label>
    </interactant>
    <organismsDiffer>false</organismsDiffer>
    <experiments>3</experiments>
</comment>
<comment type="interaction">
    <interactant intactId="EBI-5235829">
        <id>Q8IWZ5</id>
    </interactant>
    <interactant intactId="EBI-742909">
        <id>Q9H6L4</id>
        <label>ARMC7</label>
    </interactant>
    <organismsDiffer>false</organismsDiffer>
    <experiments>3</experiments>
</comment>
<comment type="interaction">
    <interactant intactId="EBI-5235829">
        <id>Q8IWZ5</id>
    </interactant>
    <interactant intactId="EBI-2875665">
        <id>Q96B67</id>
        <label>ARRDC3</label>
    </interactant>
    <organismsDiffer>false</organismsDiffer>
    <experiments>3</experiments>
</comment>
<comment type="interaction">
    <interactant intactId="EBI-5235829">
        <id>Q8IWZ5</id>
    </interactant>
    <interactant intactId="EBI-12006308">
        <id>Q7Z3C6-3</id>
        <label>ATG9A</label>
    </interactant>
    <organismsDiffer>false</organismsDiffer>
    <experiments>3</experiments>
</comment>
<comment type="interaction">
    <interactant intactId="EBI-5235829">
        <id>Q8IWZ5</id>
    </interactant>
    <interactant intactId="EBI-16429430">
        <id>A0A0S2Z4M1</id>
        <label>AXIN1</label>
    </interactant>
    <organismsDiffer>false</organismsDiffer>
    <experiments>3</experiments>
</comment>
<comment type="interaction">
    <interactant intactId="EBI-5235829">
        <id>Q8IWZ5</id>
    </interactant>
    <interactant intactId="EBI-1642333">
        <id>Q9BYV9</id>
        <label>BACH2</label>
    </interactant>
    <organismsDiffer>false</organismsDiffer>
    <experiments>3</experiments>
</comment>
<comment type="interaction">
    <interactant intactId="EBI-5235829">
        <id>Q8IWZ5</id>
    </interactant>
    <interactant intactId="EBI-745073">
        <id>Q9BXY8</id>
        <label>BEX2</label>
    </interactant>
    <organismsDiffer>false</organismsDiffer>
    <experiments>3</experiments>
</comment>
<comment type="interaction">
    <interactant intactId="EBI-5235829">
        <id>Q8IWZ5</id>
    </interactant>
    <interactant intactId="EBI-751319">
        <id>Q9H257</id>
        <label>CARD9</label>
    </interactant>
    <organismsDiffer>false</organismsDiffer>
    <experiments>3</experiments>
</comment>
<comment type="interaction">
    <interactant intactId="EBI-5235829">
        <id>Q8IWZ5</id>
    </interactant>
    <interactant intactId="EBI-744545">
        <id>Q8NEC5</id>
        <label>CATSPER1</label>
    </interactant>
    <organismsDiffer>false</organismsDiffer>
    <experiments>3</experiments>
</comment>
<comment type="interaction">
    <interactant intactId="EBI-5235829">
        <id>Q8IWZ5</id>
    </interactant>
    <interactant intactId="EBI-741724">
        <id>Q8NA61</id>
        <label>CBY2</label>
    </interactant>
    <organismsDiffer>false</organismsDiffer>
    <experiments>3</experiments>
</comment>
<comment type="interaction">
    <interactant intactId="EBI-5235829">
        <id>Q8IWZ5</id>
    </interactant>
    <interactant intactId="EBI-744556">
        <id>Q96HB5</id>
        <label>CCDC120</label>
    </interactant>
    <organismsDiffer>false</organismsDiffer>
    <experiments>3</experiments>
</comment>
<comment type="interaction">
    <interactant intactId="EBI-5235829">
        <id>Q8IWZ5</id>
    </interactant>
    <interactant intactId="EBI-1104933">
        <id>Q8N4L8</id>
        <label>CCDC24</label>
    </interactant>
    <organismsDiffer>false</organismsDiffer>
    <experiments>3</experiments>
</comment>
<comment type="interaction">
    <interactant intactId="EBI-5235829">
        <id>Q8IWZ5</id>
    </interactant>
    <interactant intactId="EBI-5278764">
        <id>Q96GN5</id>
        <label>CDCA7L</label>
    </interactant>
    <organismsDiffer>false</organismsDiffer>
    <experiments>3</experiments>
</comment>
<comment type="interaction">
    <interactant intactId="EBI-5235829">
        <id>Q8IWZ5</id>
    </interactant>
    <interactant intactId="EBI-739624">
        <id>Q8NHQ1</id>
        <label>CEP70</label>
    </interactant>
    <organismsDiffer>false</organismsDiffer>
    <experiments>3</experiments>
</comment>
<comment type="interaction">
    <interactant intactId="EBI-5235829">
        <id>Q8IWZ5</id>
    </interactant>
    <interactant intactId="EBI-10274247">
        <id>Q8TCT0</id>
        <label>CERK</label>
    </interactant>
    <organismsDiffer>false</organismsDiffer>
    <experiments>3</experiments>
</comment>
<comment type="interaction">
    <interactant intactId="EBI-5235829">
        <id>Q8IWZ5</id>
    </interactant>
    <interactant intactId="EBI-2321769">
        <id>Q9Y6H1</id>
        <label>CHCHD2</label>
    </interactant>
    <organismsDiffer>false</organismsDiffer>
    <experiments>3</experiments>
</comment>
<comment type="interaction">
    <interactant intactId="EBI-5235829">
        <id>Q8IWZ5</id>
    </interactant>
    <interactant intactId="EBI-947551">
        <id>Q9H2X0</id>
        <label>CHRD</label>
    </interactant>
    <organismsDiffer>false</organismsDiffer>
    <experiments>5</experiments>
</comment>
<comment type="interaction">
    <interactant intactId="EBI-5235829">
        <id>Q8IWZ5</id>
    </interactant>
    <interactant intactId="EBI-10192698">
        <id>Q02930-3</id>
        <label>CREB5</label>
    </interactant>
    <organismsDiffer>false</organismsDiffer>
    <experiments>6</experiments>
</comment>
<comment type="interaction">
    <interactant intactId="EBI-5235829">
        <id>Q8IWZ5</id>
    </interactant>
    <interactant intactId="EBI-3867333">
        <id>A8MQ03</id>
        <label>CYSRT1</label>
    </interactant>
    <organismsDiffer>false</organismsDiffer>
    <experiments>3</experiments>
</comment>
<comment type="interaction">
    <interactant intactId="EBI-5235829">
        <id>Q8IWZ5</id>
    </interactant>
    <interactant intactId="EBI-743414">
        <id>O95967</id>
        <label>EFEMP2</label>
    </interactant>
    <organismsDiffer>false</organismsDiffer>
    <experiments>5</experiments>
</comment>
<comment type="interaction">
    <interactant intactId="EBI-5235829">
        <id>Q8IWZ5</id>
    </interactant>
    <interactant intactId="EBI-2349927">
        <id>Q5JST6</id>
        <label>EFHC2</label>
    </interactant>
    <organismsDiffer>false</organismsDiffer>
    <experiments>3</experiments>
</comment>
<comment type="interaction">
    <interactant intactId="EBI-5235829">
        <id>Q8IWZ5</id>
    </interactant>
    <interactant intactId="EBI-489887">
        <id>P50402</id>
        <label>EMD</label>
    </interactant>
    <organismsDiffer>false</organismsDiffer>
    <experiments>6</experiments>
</comment>
<comment type="interaction">
    <interactant intactId="EBI-5235829">
        <id>Q8IWZ5</id>
    </interactant>
    <interactant intactId="EBI-11986315">
        <id>Q9H5Z6-2</id>
        <label>FAM124B</label>
    </interactant>
    <organismsDiffer>false</organismsDiffer>
    <experiments>3</experiments>
</comment>
<comment type="interaction">
    <interactant intactId="EBI-5235829">
        <id>Q8IWZ5</id>
    </interactant>
    <interactant intactId="EBI-6658203">
        <id>Q86YD7</id>
        <label>FAM90A1</label>
    </interactant>
    <organismsDiffer>false</organismsDiffer>
    <experiments>3</experiments>
</comment>
<comment type="interaction">
    <interactant intactId="EBI-5235829">
        <id>Q8IWZ5</id>
    </interactant>
    <interactant intactId="EBI-11956479">
        <id>P23142-4</id>
        <label>FBLN1</label>
    </interactant>
    <organismsDiffer>false</organismsDiffer>
    <experiments>3</experiments>
</comment>
<comment type="interaction">
    <interactant intactId="EBI-5235829">
        <id>Q8IWZ5</id>
    </interactant>
    <interactant intactId="EBI-11977403">
        <id>A0A0C3SFZ9</id>
        <label>FCHO1</label>
    </interactant>
    <organismsDiffer>false</organismsDiffer>
    <experiments>3</experiments>
</comment>
<comment type="interaction">
    <interactant intactId="EBI-5235829">
        <id>Q8IWZ5</id>
    </interactant>
    <interactant intactId="EBI-10242151">
        <id>Q53EP0-3</id>
        <label>FNDC3B</label>
    </interactant>
    <organismsDiffer>false</organismsDiffer>
    <experiments>3</experiments>
</comment>
<comment type="interaction">
    <interactant intactId="EBI-5235829">
        <id>Q8IWZ5</id>
    </interactant>
    <interactant intactId="EBI-308084">
        <id>P08151</id>
        <label>GLI1</label>
    </interactant>
    <organismsDiffer>false</organismsDiffer>
    <experiments>3</experiments>
</comment>
<comment type="interaction">
    <interactant intactId="EBI-5235829">
        <id>Q8IWZ5</id>
    </interactant>
    <interactant intactId="EBI-374781">
        <id>O76003</id>
        <label>GLRX3</label>
    </interactant>
    <organismsDiffer>false</organismsDiffer>
    <experiments>6</experiments>
</comment>
<comment type="interaction">
    <interactant intactId="EBI-5235829">
        <id>Q8IWZ5</id>
    </interactant>
    <interactant intactId="EBI-748515">
        <id>Q8IVS8</id>
        <label>GLYCTK</label>
    </interactant>
    <organismsDiffer>false</organismsDiffer>
    <experiments>3</experiments>
</comment>
<comment type="interaction">
    <interactant intactId="EBI-5235829">
        <id>Q8IWZ5</id>
    </interactant>
    <interactant intactId="EBI-11975289">
        <id>Q9Y223-2</id>
        <label>GNE</label>
    </interactant>
    <organismsDiffer>false</organismsDiffer>
    <experiments>3</experiments>
</comment>
<comment type="interaction">
    <interactant intactId="EBI-5235829">
        <id>Q8IWZ5</id>
    </interactant>
    <interactant intactId="EBI-618309">
        <id>Q08379</id>
        <label>GOLGA2</label>
    </interactant>
    <organismsDiffer>false</organismsDiffer>
    <experiments>3</experiments>
</comment>
<comment type="interaction">
    <interactant intactId="EBI-5235829">
        <id>Q8IWZ5</id>
    </interactant>
    <interactant intactId="EBI-11978177">
        <id>Q96NT3-2</id>
        <label>GUCD1</label>
    </interactant>
    <organismsDiffer>false</organismsDiffer>
    <experiments>3</experiments>
</comment>
<comment type="interaction">
    <interactant intactId="EBI-5235829">
        <id>Q8IWZ5</id>
    </interactant>
    <interactant intactId="EBI-740785">
        <id>P49639</id>
        <label>HOXA1</label>
    </interactant>
    <organismsDiffer>false</organismsDiffer>
    <experiments>12</experiments>
</comment>
<comment type="interaction">
    <interactant intactId="EBI-5235829">
        <id>Q8IWZ5</id>
    </interactant>
    <interactant intactId="EBI-1752118">
        <id>P31273</id>
        <label>HOXC8</label>
    </interactant>
    <organismsDiffer>false</organismsDiffer>
    <experiments>3</experiments>
</comment>
<comment type="interaction">
    <interactant intactId="EBI-5235829">
        <id>Q8IWZ5</id>
    </interactant>
    <interactant intactId="EBI-3918847">
        <id>Q9H2F3</id>
        <label>HSD3B7</label>
    </interactant>
    <organismsDiffer>false</organismsDiffer>
    <experiments>5</experiments>
</comment>
<comment type="interaction">
    <interactant intactId="EBI-5235829">
        <id>Q8IWZ5</id>
    </interactant>
    <interactant intactId="EBI-11955401">
        <id>Q86VF2-5</id>
        <label>IGFN1</label>
    </interactant>
    <organismsDiffer>false</organismsDiffer>
    <experiments>3</experiments>
</comment>
<comment type="interaction">
    <interactant intactId="EBI-5235829">
        <id>Q8IWZ5</id>
    </interactant>
    <interactant intactId="EBI-8638439">
        <id>Q8IYA8</id>
        <label>IHO1</label>
    </interactant>
    <organismsDiffer>false</organismsDiffer>
    <experiments>3</experiments>
</comment>
<comment type="interaction">
    <interactant intactId="EBI-5235829">
        <id>Q8IWZ5</id>
    </interactant>
    <interactant intactId="EBI-747204">
        <id>Q9UKT9</id>
        <label>IKZF3</label>
    </interactant>
    <organismsDiffer>false</organismsDiffer>
    <experiments>3</experiments>
</comment>
<comment type="interaction">
    <interactant intactId="EBI-5235829">
        <id>Q8IWZ5</id>
    </interactant>
    <interactant intactId="EBI-17178971">
        <id>Q14005-2</id>
        <label>IL16</label>
    </interactant>
    <organismsDiffer>false</organismsDiffer>
    <experiments>3</experiments>
</comment>
<comment type="interaction">
    <interactant intactId="EBI-5235829">
        <id>Q8IWZ5</id>
    </interactant>
    <interactant intactId="EBI-10220600">
        <id>Q8NA54</id>
        <label>IQUB</label>
    </interactant>
    <organismsDiffer>false</organismsDiffer>
    <experiments>3</experiments>
</comment>
<comment type="interaction">
    <interactant intactId="EBI-5235829">
        <id>Q8IWZ5</id>
    </interactant>
    <interactant intactId="EBI-4397613">
        <id>Q7L273</id>
        <label>KCTD9</label>
    </interactant>
    <organismsDiffer>false</organismsDiffer>
    <experiments>6</experiments>
</comment>
<comment type="interaction">
    <interactant intactId="EBI-5235829">
        <id>Q8IWZ5</id>
    </interactant>
    <interactant intactId="EBI-6426443">
        <id>Q2WGJ6</id>
        <label>KLHL38</label>
    </interactant>
    <organismsDiffer>false</organismsDiffer>
    <experiments>6</experiments>
</comment>
<comment type="interaction">
    <interactant intactId="EBI-5235829">
        <id>Q8IWZ5</id>
    </interactant>
    <interactant intactId="EBI-10981970">
        <id>Q5T749</id>
        <label>KPRP</label>
    </interactant>
    <organismsDiffer>false</organismsDiffer>
    <experiments>3</experiments>
</comment>
<comment type="interaction">
    <interactant intactId="EBI-5235829">
        <id>Q8IWZ5</id>
    </interactant>
    <interactant intactId="EBI-10171552">
        <id>A1A4E9</id>
        <label>KRT13</label>
    </interactant>
    <organismsDiffer>false</organismsDiffer>
    <experiments>3</experiments>
</comment>
<comment type="interaction">
    <interactant intactId="EBI-5235829">
        <id>Q8IWZ5</id>
    </interactant>
    <interactant intactId="EBI-739566">
        <id>P19012</id>
        <label>KRT15</label>
    </interactant>
    <organismsDiffer>false</organismsDiffer>
    <experiments>3</experiments>
</comment>
<comment type="interaction">
    <interactant intactId="EBI-5235829">
        <id>Q8IWZ5</id>
    </interactant>
    <interactant intactId="EBI-1047093">
        <id>O76011</id>
        <label>KRT34</label>
    </interactant>
    <organismsDiffer>false</organismsDiffer>
    <experiments>3</experiments>
</comment>
<comment type="interaction">
    <interactant intactId="EBI-5235829">
        <id>Q8IWZ5</id>
    </interactant>
    <interactant intactId="EBI-10171697">
        <id>Q6A162</id>
        <label>KRT40</label>
    </interactant>
    <organismsDiffer>false</organismsDiffer>
    <experiments>3</experiments>
</comment>
<comment type="interaction">
    <interactant intactId="EBI-5235829">
        <id>Q8IWZ5</id>
    </interactant>
    <interactant intactId="EBI-10172150">
        <id>P60370</id>
        <label>KRTAP10-5</label>
    </interactant>
    <organismsDiffer>false</organismsDiffer>
    <experiments>3</experiments>
</comment>
<comment type="interaction">
    <interactant intactId="EBI-5235829">
        <id>Q8IWZ5</id>
    </interactant>
    <interactant intactId="EBI-10172290">
        <id>P60409</id>
        <label>KRTAP10-7</label>
    </interactant>
    <organismsDiffer>false</organismsDiffer>
    <experiments>3</experiments>
</comment>
<comment type="interaction">
    <interactant intactId="EBI-5235829">
        <id>Q8IWZ5</id>
    </interactant>
    <interactant intactId="EBI-10171774">
        <id>P60410</id>
        <label>KRTAP10-8</label>
    </interactant>
    <organismsDiffer>false</organismsDiffer>
    <experiments>3</experiments>
</comment>
<comment type="interaction">
    <interactant intactId="EBI-5235829">
        <id>Q8IWZ5</id>
    </interactant>
    <interactant intactId="EBI-10172052">
        <id>P60411</id>
        <label>KRTAP10-9</label>
    </interactant>
    <organismsDiffer>false</organismsDiffer>
    <experiments>6</experiments>
</comment>
<comment type="interaction">
    <interactant intactId="EBI-5235829">
        <id>Q8IWZ5</id>
    </interactant>
    <interactant intactId="EBI-10176379">
        <id>P59991</id>
        <label>KRTAP12-2</label>
    </interactant>
    <organismsDiffer>false</organismsDiffer>
    <experiments>3</experiments>
</comment>
<comment type="interaction">
    <interactant intactId="EBI-5235829">
        <id>Q8IWZ5</id>
    </interactant>
    <interactant intactId="EBI-14065470">
        <id>Q9BYR9</id>
        <label>KRTAP2-4</label>
    </interactant>
    <organismsDiffer>false</organismsDiffer>
    <experiments>3</experiments>
</comment>
<comment type="interaction">
    <interactant intactId="EBI-5235829">
        <id>Q8IWZ5</id>
    </interactant>
    <interactant intactId="EBI-3957672">
        <id>Q6PEX3</id>
        <label>KRTAP26-1</label>
    </interactant>
    <organismsDiffer>false</organismsDiffer>
    <experiments>3</experiments>
</comment>
<comment type="interaction">
    <interactant intactId="EBI-5235829">
        <id>Q8IWZ5</id>
    </interactant>
    <interactant intactId="EBI-751260">
        <id>Q9BYR7</id>
        <label>KRTAP3-2</label>
    </interactant>
    <organismsDiffer>false</organismsDiffer>
    <experiments>3</experiments>
</comment>
<comment type="interaction">
    <interactant intactId="EBI-5235829">
        <id>Q8IWZ5</id>
    </interactant>
    <interactant intactId="EBI-10172511">
        <id>Q9BYR5</id>
        <label>KRTAP4-2</label>
    </interactant>
    <organismsDiffer>false</organismsDiffer>
    <experiments>6</experiments>
</comment>
<comment type="interaction">
    <interactant intactId="EBI-5235829">
        <id>Q8IWZ5</id>
    </interactant>
    <interactant intactId="EBI-11958132">
        <id>Q9BYR3</id>
        <label>KRTAP4-4</label>
    </interactant>
    <organismsDiffer>false</organismsDiffer>
    <experiments>3</experiments>
</comment>
<comment type="interaction">
    <interactant intactId="EBI-5235829">
        <id>Q8IWZ5</id>
    </interactant>
    <interactant intactId="EBI-11993254">
        <id>Q9BYR2</id>
        <label>KRTAP4-5</label>
    </interactant>
    <organismsDiffer>false</organismsDiffer>
    <experiments>3</experiments>
</comment>
<comment type="interaction">
    <interactant intactId="EBI-5235829">
        <id>Q8IWZ5</id>
    </interactant>
    <interactant intactId="EBI-11993296">
        <id>Q6L8G4</id>
        <label>KRTAP5-11</label>
    </interactant>
    <organismsDiffer>false</organismsDiffer>
    <experiments>3</experiments>
</comment>
<comment type="interaction">
    <interactant intactId="EBI-5235829">
        <id>Q8IWZ5</id>
    </interactant>
    <interactant intactId="EBI-11987425">
        <id>Q6L8G8</id>
        <label>KRTAP5-7</label>
    </interactant>
    <organismsDiffer>false</organismsDiffer>
    <experiments>3</experiments>
</comment>
<comment type="interaction">
    <interactant intactId="EBI-5235829">
        <id>Q8IWZ5</id>
    </interactant>
    <interactant intactId="EBI-1043191">
        <id>Q9BYQ3</id>
        <label>KRTAP9-3</label>
    </interactant>
    <organismsDiffer>false</organismsDiffer>
    <experiments>3</experiments>
</comment>
<comment type="interaction">
    <interactant intactId="EBI-5235829">
        <id>Q8IWZ5</id>
    </interactant>
    <interactant intactId="EBI-739909">
        <id>Q969R5</id>
        <label>L3MBTL2</label>
    </interactant>
    <organismsDiffer>false</organismsDiffer>
    <experiments>3</experiments>
</comment>
<comment type="interaction">
    <interactant intactId="EBI-5235829">
        <id>Q8IWZ5</id>
    </interactant>
    <interactant intactId="EBI-11962058">
        <id>Q5T7P2</id>
        <label>LCE1A</label>
    </interactant>
    <organismsDiffer>false</organismsDiffer>
    <experiments>3</experiments>
</comment>
<comment type="interaction">
    <interactant intactId="EBI-5235829">
        <id>Q8IWZ5</id>
    </interactant>
    <interactant intactId="EBI-10245913">
        <id>Q5T7P3</id>
        <label>LCE1B</label>
    </interactant>
    <organismsDiffer>false</organismsDiffer>
    <experiments>6</experiments>
</comment>
<comment type="interaction">
    <interactant intactId="EBI-5235829">
        <id>Q8IWZ5</id>
    </interactant>
    <interactant intactId="EBI-12224199">
        <id>Q5T751</id>
        <label>LCE1C</label>
    </interactant>
    <organismsDiffer>false</organismsDiffer>
    <experiments>3</experiments>
</comment>
<comment type="interaction">
    <interactant intactId="EBI-5235829">
        <id>Q8IWZ5</id>
    </interactant>
    <interactant intactId="EBI-11741311">
        <id>Q5T752</id>
        <label>LCE1D</label>
    </interactant>
    <organismsDiffer>false</organismsDiffer>
    <experiments>3</experiments>
</comment>
<comment type="interaction">
    <interactant intactId="EBI-5235829">
        <id>Q8IWZ5</id>
    </interactant>
    <interactant intactId="EBI-11955335">
        <id>Q5T753</id>
        <label>LCE1E</label>
    </interactant>
    <organismsDiffer>false</organismsDiffer>
    <experiments>3</experiments>
</comment>
<comment type="interaction">
    <interactant intactId="EBI-5235829">
        <id>Q8IWZ5</id>
    </interactant>
    <interactant intactId="EBI-11958008">
        <id>Q5T754</id>
        <label>LCE1F</label>
    </interactant>
    <organismsDiffer>false</organismsDiffer>
    <experiments>6</experiments>
</comment>
<comment type="interaction">
    <interactant intactId="EBI-5235829">
        <id>Q8IWZ5</id>
    </interactant>
    <interactant intactId="EBI-10246607">
        <id>Q5TA79</id>
        <label>LCE2A</label>
    </interactant>
    <organismsDiffer>false</organismsDiffer>
    <experiments>3</experiments>
</comment>
<comment type="interaction">
    <interactant intactId="EBI-5235829">
        <id>Q8IWZ5</id>
    </interactant>
    <interactant intactId="EBI-11478468">
        <id>O14633</id>
        <label>LCE2B</label>
    </interactant>
    <organismsDiffer>false</organismsDiffer>
    <experiments>5</experiments>
</comment>
<comment type="interaction">
    <interactant intactId="EBI-5235829">
        <id>Q8IWZ5</id>
    </interactant>
    <interactant intactId="EBI-11973993">
        <id>Q5TA81</id>
        <label>LCE2C</label>
    </interactant>
    <organismsDiffer>false</organismsDiffer>
    <experiments>8</experiments>
</comment>
<comment type="interaction">
    <interactant intactId="EBI-5235829">
        <id>Q8IWZ5</id>
    </interactant>
    <interactant intactId="EBI-10246750">
        <id>Q5TA82</id>
        <label>LCE2D</label>
    </interactant>
    <organismsDiffer>false</organismsDiffer>
    <experiments>3</experiments>
</comment>
<comment type="interaction">
    <interactant intactId="EBI-5235829">
        <id>Q8IWZ5</id>
    </interactant>
    <interactant intactId="EBI-9394625">
        <id>Q5TA76</id>
        <label>LCE3A</label>
    </interactant>
    <organismsDiffer>false</organismsDiffer>
    <experiments>5</experiments>
</comment>
<comment type="interaction">
    <interactant intactId="EBI-5235829">
        <id>Q8IWZ5</id>
    </interactant>
    <interactant intactId="EBI-10245291">
        <id>Q5T5A8</id>
        <label>LCE3C</label>
    </interactant>
    <organismsDiffer>false</organismsDiffer>
    <experiments>5</experiments>
</comment>
<comment type="interaction">
    <interactant intactId="EBI-5235829">
        <id>Q8IWZ5</id>
    </interactant>
    <interactant intactId="EBI-6658837">
        <id>Q9BYE3</id>
        <label>LCE3D</label>
    </interactant>
    <organismsDiffer>false</organismsDiffer>
    <experiments>3</experiments>
</comment>
<comment type="interaction">
    <interactant intactId="EBI-5235829">
        <id>Q8IWZ5</id>
    </interactant>
    <interactant intactId="EBI-10245456">
        <id>Q5T5B0</id>
        <label>LCE3E</label>
    </interactant>
    <organismsDiffer>false</organismsDiffer>
    <experiments>3</experiments>
</comment>
<comment type="interaction">
    <interactant intactId="EBI-5235829">
        <id>Q8IWZ5</id>
    </interactant>
    <interactant intactId="EBI-10246358">
        <id>Q5TA78</id>
        <label>LCE4A</label>
    </interactant>
    <organismsDiffer>false</organismsDiffer>
    <experiments>3</experiments>
</comment>
<comment type="interaction">
    <interactant intactId="EBI-5235829">
        <id>Q8IWZ5</id>
    </interactant>
    <interactant intactId="EBI-11955689">
        <id>Q5TCM9</id>
        <label>LCE5A</label>
    </interactant>
    <organismsDiffer>false</organismsDiffer>
    <experiments>5</experiments>
</comment>
<comment type="interaction">
    <interactant intactId="EBI-5235829">
        <id>Q8IWZ5</id>
    </interactant>
    <interactant intactId="EBI-739832">
        <id>Q8TBB1</id>
        <label>LNX1</label>
    </interactant>
    <organismsDiffer>false</organismsDiffer>
    <experiments>3</experiments>
</comment>
<comment type="interaction">
    <interactant intactId="EBI-5235829">
        <id>Q8IWZ5</id>
    </interactant>
    <interactant intactId="EBI-2341787">
        <id>Q17RB8</id>
        <label>LONRF1</label>
    </interactant>
    <organismsDiffer>false</organismsDiffer>
    <experiments>8</experiments>
</comment>
<comment type="interaction">
    <interactant intactId="EBI-5235829">
        <id>Q8IWZ5</id>
    </interactant>
    <interactant intactId="EBI-741037">
        <id>Q9BRK4</id>
        <label>LZTS2</label>
    </interactant>
    <organismsDiffer>false</organismsDiffer>
    <experiments>3</experiments>
</comment>
<comment type="interaction">
    <interactant intactId="EBI-5235829">
        <id>Q8IWZ5</id>
    </interactant>
    <interactant intactId="EBI-746778">
        <id>Q96A72</id>
        <label>MAGOHB</label>
    </interactant>
    <organismsDiffer>false</organismsDiffer>
    <experiments>3</experiments>
</comment>
<comment type="interaction">
    <interactant intactId="EBI-5235829">
        <id>Q8IWZ5</id>
    </interactant>
    <interactant intactId="EBI-947402">
        <id>O60336</id>
        <label>MAPKBP1</label>
    </interactant>
    <organismsDiffer>false</organismsDiffer>
    <experiments>3</experiments>
</comment>
<comment type="interaction">
    <interactant intactId="EBI-5235829">
        <id>Q8IWZ5</id>
    </interactant>
    <interactant intactId="EBI-8025850">
        <id>O14770-4</id>
        <label>MEIS2</label>
    </interactant>
    <organismsDiffer>false</organismsDiffer>
    <experiments>3</experiments>
</comment>
<comment type="interaction">
    <interactant intactId="EBI-5235829">
        <id>Q8IWZ5</id>
    </interactant>
    <interactant intactId="EBI-748397">
        <id>P50222</id>
        <label>MEOX2</label>
    </interactant>
    <organismsDiffer>false</organismsDiffer>
    <experiments>3</experiments>
</comment>
<comment type="interaction">
    <interactant intactId="EBI-5235829">
        <id>Q8IWZ5</id>
    </interactant>
    <interactant intactId="EBI-16439278">
        <id>Q6FHY5</id>
        <label>MEOX2</label>
    </interactant>
    <organismsDiffer>false</organismsDiffer>
    <experiments>3</experiments>
</comment>
<comment type="interaction">
    <interactant intactId="EBI-5235829">
        <id>Q8IWZ5</id>
    </interactant>
    <interactant intactId="EBI-1048159">
        <id>P55081</id>
        <label>MFAP1</label>
    </interactant>
    <organismsDiffer>false</organismsDiffer>
    <experiments>3</experiments>
</comment>
<comment type="interaction">
    <interactant intactId="EBI-5235829">
        <id>Q8IWZ5</id>
    </interactant>
    <interactant intactId="EBI-10172526">
        <id>Q9UJV3-2</id>
        <label>MID2</label>
    </interactant>
    <organismsDiffer>false</organismsDiffer>
    <experiments>3</experiments>
</comment>
<comment type="interaction">
    <interactant intactId="EBI-5235829">
        <id>Q8IWZ5</id>
    </interactant>
    <interactant intactId="EBI-742948">
        <id>Q5JR59</id>
        <label>MTUS2</label>
    </interactant>
    <organismsDiffer>false</organismsDiffer>
    <experiments>3</experiments>
</comment>
<comment type="interaction">
    <interactant intactId="EBI-5235829">
        <id>Q8IWZ5</id>
    </interactant>
    <interactant intactId="EBI-1752987">
        <id>Q86SG6</id>
        <label>NEK8</label>
    </interactant>
    <organismsDiffer>false</organismsDiffer>
    <experiments>3</experiments>
</comment>
<comment type="interaction">
    <interactant intactId="EBI-5235829">
        <id>Q8IWZ5</id>
    </interactant>
    <interactant intactId="EBI-945833">
        <id>Q7Z3S9</id>
        <label>NOTCH2NLA</label>
    </interactant>
    <organismsDiffer>false</organismsDiffer>
    <experiments>6</experiments>
</comment>
<comment type="interaction">
    <interactant intactId="EBI-5235829">
        <id>Q8IWZ5</id>
    </interactant>
    <interactant intactId="EBI-22310682">
        <id>P0DPK4</id>
        <label>NOTCH2NLC</label>
    </interactant>
    <organismsDiffer>false</organismsDiffer>
    <experiments>3</experiments>
</comment>
<comment type="interaction">
    <interactant intactId="EBI-5235829">
        <id>Q8IWZ5</id>
    </interactant>
    <interactant intactId="EBI-740446">
        <id>P32242</id>
        <label>OTX1</label>
    </interactant>
    <organismsDiffer>false</organismsDiffer>
    <experiments>3</experiments>
</comment>
<comment type="interaction">
    <interactant intactId="EBI-5235829">
        <id>Q8IWZ5</id>
    </interactant>
    <interactant intactId="EBI-11956269">
        <id>Q92824-2</id>
        <label>PCSK5</label>
    </interactant>
    <organismsDiffer>false</organismsDiffer>
    <experiments>3</experiments>
</comment>
<comment type="interaction">
    <interactant intactId="EBI-5235829">
        <id>Q8IWZ5</id>
    </interactant>
    <interactant intactId="EBI-14084211">
        <id>A2BDE7</id>
        <label>PHLDA1</label>
    </interactant>
    <organismsDiffer>false</organismsDiffer>
    <experiments>3</experiments>
</comment>
<comment type="interaction">
    <interactant intactId="EBI-5235829">
        <id>Q8IWZ5</id>
    </interactant>
    <interactant intactId="EBI-740019">
        <id>O15162</id>
        <label>PLSCR1</label>
    </interactant>
    <organismsDiffer>false</organismsDiffer>
    <experiments>3</experiments>
</comment>
<comment type="interaction">
    <interactant intactId="EBI-5235829">
        <id>Q8IWZ5</id>
    </interactant>
    <interactant intactId="EBI-769257">
        <id>Q9NRQ2</id>
        <label>PLSCR4</label>
    </interactant>
    <organismsDiffer>false</organismsDiffer>
    <experiments>5</experiments>
</comment>
<comment type="interaction">
    <interactant intactId="EBI-5235829">
        <id>Q8IWZ5</id>
    </interactant>
    <interactant intactId="EBI-302345">
        <id>Q8ND90</id>
        <label>PNMA1</label>
    </interactant>
    <organismsDiffer>false</organismsDiffer>
    <experiments>3</experiments>
</comment>
<comment type="interaction">
    <interactant intactId="EBI-5235829">
        <id>Q8IWZ5</id>
    </interactant>
    <interactant intactId="EBI-17236143">
        <id>Q12837</id>
        <label>POU4F2</label>
    </interactant>
    <organismsDiffer>false</organismsDiffer>
    <experiments>5</experiments>
</comment>
<comment type="interaction">
    <interactant intactId="EBI-5235829">
        <id>Q8IWZ5</id>
    </interactant>
    <interactant intactId="EBI-1053424">
        <id>O43741</id>
        <label>PRKAB2</label>
    </interactant>
    <organismsDiffer>false</organismsDiffer>
    <experiments>3</experiments>
</comment>
<comment type="interaction">
    <interactant intactId="EBI-5235829">
        <id>Q8IWZ5</id>
    </interactant>
    <interactant intactId="EBI-9027467">
        <id>O75360</id>
        <label>PROP1</label>
    </interactant>
    <organismsDiffer>false</organismsDiffer>
    <experiments>3</experiments>
</comment>
<comment type="interaction">
    <interactant intactId="EBI-5235829">
        <id>Q8IWZ5</id>
    </interactant>
    <interactant intactId="EBI-359352">
        <id>P25786</id>
        <label>PSMA1</label>
    </interactant>
    <organismsDiffer>false</organismsDiffer>
    <experiments>3</experiments>
</comment>
<comment type="interaction">
    <interactant intactId="EBI-5235829">
        <id>Q8IWZ5</id>
    </interactant>
    <interactant intactId="EBI-750973">
        <id>O00233</id>
        <label>PSMD9</label>
    </interactant>
    <organismsDiffer>false</organismsDiffer>
    <experiments>3</experiments>
</comment>
<comment type="interaction">
    <interactant intactId="EBI-5235829">
        <id>Q8IWZ5</id>
    </interactant>
    <interactant intactId="EBI-10234038">
        <id>P43115-12</id>
        <label>PTGER3</label>
    </interactant>
    <organismsDiffer>false</organismsDiffer>
    <experiments>3</experiments>
</comment>
<comment type="interaction">
    <interactant intactId="EBI-5235829">
        <id>Q8IWZ5</id>
    </interactant>
    <interactant intactId="EBI-948428">
        <id>Q9Y2K5</id>
        <label>R3HDM2</label>
    </interactant>
    <organismsDiffer>false</organismsDiffer>
    <experiments>3</experiments>
</comment>
<comment type="interaction">
    <interactant intactId="EBI-5235829">
        <id>Q8IWZ5</id>
    </interactant>
    <interactant intactId="EBI-744023">
        <id>Q9BTL3</id>
        <label>RAMAC</label>
    </interactant>
    <organismsDiffer>false</organismsDiffer>
    <experiments>3</experiments>
</comment>
<comment type="interaction">
    <interactant intactId="EBI-5235829">
        <id>Q8IWZ5</id>
    </interactant>
    <interactant intactId="EBI-743428">
        <id>Q9P2K3</id>
        <label>RCOR3</label>
    </interactant>
    <organismsDiffer>false</organismsDiffer>
    <experiments>3</experiments>
</comment>
<comment type="interaction">
    <interactant intactId="EBI-5235829">
        <id>Q8IWZ5</id>
    </interactant>
    <interactant intactId="EBI-10224192">
        <id>Q06455-4</id>
        <label>RUNX1T1</label>
    </interactant>
    <organismsDiffer>false</organismsDiffer>
    <experiments>3</experiments>
</comment>
<comment type="interaction">
    <interactant intactId="EBI-5235829">
        <id>Q8IWZ5</id>
    </interactant>
    <interactant intactId="EBI-748391">
        <id>Q9BWG6</id>
        <label>SCNM1</label>
    </interactant>
    <organismsDiffer>false</organismsDiffer>
    <experiments>3</experiments>
</comment>
<comment type="interaction">
    <interactant intactId="EBI-5235829">
        <id>Q8IWZ5</id>
    </interactant>
    <interactant intactId="EBI-11955083">
        <id>Q9NUL5-4</id>
        <label>SHFL</label>
    </interactant>
    <organismsDiffer>false</organismsDiffer>
    <experiments>3</experiments>
</comment>
<comment type="interaction">
    <interactant intactId="EBI-5235829">
        <id>Q8IWZ5</id>
    </interactant>
    <interactant intactId="EBI-947791">
        <id>O75093</id>
        <label>SLIT1</label>
    </interactant>
    <organismsDiffer>false</organismsDiffer>
    <experiments>3</experiments>
</comment>
<comment type="interaction">
    <interactant intactId="EBI-5235829">
        <id>Q8IWZ5</id>
    </interactant>
    <interactant intactId="EBI-355653">
        <id>Q92922</id>
        <label>SMARCC1</label>
    </interactant>
    <organismsDiffer>false</organismsDiffer>
    <experiments>3</experiments>
</comment>
<comment type="interaction">
    <interactant intactId="EBI-5235829">
        <id>Q8IWZ5</id>
    </interactant>
    <interactant intactId="EBI-750494">
        <id>P49901</id>
        <label>SMCP</label>
    </interactant>
    <organismsDiffer>false</organismsDiffer>
    <experiments>3</experiments>
</comment>
<comment type="interaction">
    <interactant intactId="EBI-5235829">
        <id>Q8IWZ5</id>
    </interactant>
    <interactant intactId="EBI-11959123">
        <id>Q99932-2</id>
        <label>SPAG8</label>
    </interactant>
    <organismsDiffer>false</organismsDiffer>
    <experiments>5</experiments>
</comment>
<comment type="interaction">
    <interactant intactId="EBI-5235829">
        <id>Q8IWZ5</id>
    </interactant>
    <interactant intactId="EBI-5235340">
        <id>Q7Z699</id>
        <label>SPRED1</label>
    </interactant>
    <organismsDiffer>false</organismsDiffer>
    <experiments>3</experiments>
</comment>
<comment type="interaction">
    <interactant intactId="EBI-5235829">
        <id>Q8IWZ5</id>
    </interactant>
    <interactant intactId="EBI-2212028">
        <id>Q9Y2D8</id>
        <label>SSX2IP</label>
    </interactant>
    <organismsDiffer>false</organismsDiffer>
    <experiments>3</experiments>
</comment>
<comment type="interaction">
    <interactant intactId="EBI-5235829">
        <id>Q8IWZ5</id>
    </interactant>
    <interactant intactId="EBI-749295">
        <id>O75716</id>
        <label>STK16</label>
    </interactant>
    <organismsDiffer>false</organismsDiffer>
    <experiments>6</experiments>
</comment>
<comment type="interaction">
    <interactant intactId="EBI-5235829">
        <id>Q8IWZ5</id>
    </interactant>
    <interactant intactId="EBI-10172380">
        <id>Q5VWN6-2</id>
        <label>TASOR2</label>
    </interactant>
    <organismsDiffer>false</organismsDiffer>
    <experiments>3</experiments>
</comment>
<comment type="interaction">
    <interactant intactId="EBI-5235829">
        <id>Q8IWZ5</id>
    </interactant>
    <interactant intactId="EBI-11974855">
        <id>Q9Y4C2-2</id>
        <label>TCAF1</label>
    </interactant>
    <organismsDiffer>false</organismsDiffer>
    <experiments>3</experiments>
</comment>
<comment type="interaction">
    <interactant intactId="EBI-5235829">
        <id>Q8IWZ5</id>
    </interactant>
    <interactant intactId="EBI-11952651">
        <id>Q7Z6R9</id>
        <label>TFAP2D</label>
    </interactant>
    <organismsDiffer>false</organismsDiffer>
    <experiments>3</experiments>
</comment>
<comment type="interaction">
    <interactant intactId="EBI-5235829">
        <id>Q8IWZ5</id>
    </interactant>
    <interactant intactId="EBI-3939165">
        <id>O43711</id>
        <label>TLX3</label>
    </interactant>
    <organismsDiffer>false</organismsDiffer>
    <experiments>3</experiments>
</comment>
<comment type="interaction">
    <interactant intactId="EBI-5235829">
        <id>Q8IWZ5</id>
    </interactant>
    <interactant intactId="EBI-2799342">
        <id>Q86TG1</id>
        <label>TMEM150A</label>
    </interactant>
    <organismsDiffer>false</organismsDiffer>
    <experiments>3</experiments>
</comment>
<comment type="interaction">
    <interactant intactId="EBI-5235829">
        <id>Q8IWZ5</id>
    </interactant>
    <interactant intactId="EBI-359224">
        <id>Q13077</id>
        <label>TRAF1</label>
    </interactant>
    <organismsDiffer>false</organismsDiffer>
    <experiments>3</experiments>
</comment>
<comment type="interaction">
    <interactant intactId="EBI-5235829">
        <id>Q8IWZ5</id>
    </interactant>
    <interactant intactId="EBI-355744">
        <id>Q12933</id>
        <label>TRAF2</label>
    </interactant>
    <organismsDiffer>false</organismsDiffer>
    <experiments>3</experiments>
</comment>
<comment type="interaction">
    <interactant intactId="EBI-5235829">
        <id>Q8IWZ5</id>
    </interactant>
    <interactant intactId="EBI-5663373">
        <id>P0DI81</id>
        <label>TRAPPC2</label>
    </interactant>
    <organismsDiffer>false</organismsDiffer>
    <experiments>3</experiments>
</comment>
<comment type="interaction">
    <interactant intactId="EBI-5235829">
        <id>Q8IWZ5</id>
    </interactant>
    <interactant intactId="EBI-740098">
        <id>P36406</id>
        <label>TRIM23</label>
    </interactant>
    <organismsDiffer>false</organismsDiffer>
    <experiments>3</experiments>
</comment>
<comment type="interaction">
    <interactant intactId="EBI-5235829">
        <id>Q8IWZ5</id>
    </interactant>
    <interactant intactId="EBI-719493">
        <id>P14373</id>
        <label>TRIM27</label>
    </interactant>
    <organismsDiffer>false</organismsDiffer>
    <experiments>3</experiments>
</comment>
<comment type="interaction">
    <interactant intactId="EBI-5235829">
        <id>Q8IWZ5</id>
    </interactant>
    <interactant intactId="EBI-2825190">
        <id>Q86UY0</id>
        <label>TXNDC5</label>
    </interactant>
    <organismsDiffer>false</organismsDiffer>
    <experiments>3</experiments>
</comment>
<comment type="interaction">
    <interactant intactId="EBI-5235829">
        <id>Q8IWZ5</id>
    </interactant>
    <interactant intactId="EBI-11957216">
        <id>A8MV65-2</id>
        <label>VGLL3</label>
    </interactant>
    <organismsDiffer>false</organismsDiffer>
    <experiments>3</experiments>
</comment>
<comment type="interaction">
    <interactant intactId="EBI-5235829">
        <id>Q8IWZ5</id>
    </interactant>
    <interactant intactId="EBI-10270911">
        <id>Q8NEZ2-2</id>
        <label>VPS37A</label>
    </interactant>
    <organismsDiffer>false</organismsDiffer>
    <experiments>3</experiments>
</comment>
<comment type="interaction">
    <interactant intactId="EBI-5235829">
        <id>Q8IWZ5</id>
    </interactant>
    <interactant intactId="EBI-11747707">
        <id>B2RUY7</id>
        <label>VWC2L</label>
    </interactant>
    <organismsDiffer>false</organismsDiffer>
    <experiments>3</experiments>
</comment>
<comment type="interaction">
    <interactant intactId="EBI-5235829">
        <id>Q8IWZ5</id>
    </interactant>
    <interactant intactId="EBI-743787">
        <id>Q9GZM5</id>
        <label>YIPF3</label>
    </interactant>
    <organismsDiffer>false</organismsDiffer>
    <experiments>3</experiments>
</comment>
<comment type="interaction">
    <interactant intactId="EBI-5235829">
        <id>Q8IWZ5</id>
    </interactant>
    <interactant intactId="EBI-359854">
        <id>P27348</id>
        <label>YWHAQ</label>
    </interactant>
    <organismsDiffer>false</organismsDiffer>
    <experiments>4</experiments>
</comment>
<comment type="interaction">
    <interactant intactId="EBI-5235829">
        <id>Q8IWZ5</id>
    </interactant>
    <interactant intactId="EBI-765538">
        <id>P25490</id>
        <label>YY1</label>
    </interactant>
    <organismsDiffer>false</organismsDiffer>
    <experiments>3</experiments>
</comment>
<comment type="interaction">
    <interactant intactId="EBI-5235829">
        <id>Q8IWZ5</id>
    </interactant>
    <interactant intactId="EBI-2682961">
        <id>Q9Y2K1</id>
        <label>ZBTB1</label>
    </interactant>
    <organismsDiffer>false</organismsDiffer>
    <experiments>3</experiments>
</comment>
<comment type="interaction">
    <interactant intactId="EBI-5235829">
        <id>Q8IWZ5</id>
    </interactant>
    <interactant intactId="EBI-373456">
        <id>Q9Y3S2</id>
        <label>ZNF330</label>
    </interactant>
    <organismsDiffer>false</organismsDiffer>
    <experiments>3</experiments>
</comment>
<comment type="interaction">
    <interactant intactId="EBI-5235829">
        <id>Q8IWZ5</id>
    </interactant>
    <interactant intactId="EBI-744257">
        <id>Q96IQ9</id>
        <label>ZNF414</label>
    </interactant>
    <organismsDiffer>false</organismsDiffer>
    <experiments>3</experiments>
</comment>
<comment type="alternative products">
    <event type="alternative splicing"/>
    <isoform>
        <id>Q8IWZ5-1</id>
        <name>1</name>
        <sequence type="displayed"/>
    </isoform>
    <isoform>
        <id>Q8IWZ5-2</id>
        <name>2</name>
        <sequence type="described" ref="VSP_012066 VSP_012067"/>
    </isoform>
</comment>
<comment type="similarity">
    <text evidence="11">Belongs to the TRIM/RBCC family.</text>
</comment>
<comment type="sequence caution" evidence="11">
    <conflict type="erroneous termination">
        <sequence resource="EMBL-CDS" id="BAC05042"/>
    </conflict>
    <text>Truncated C-terminus.</text>
</comment>
<proteinExistence type="evidence at protein level"/>
<accession>Q8IWZ5</accession>
<accession>A1L4B4</accession>
<accession>A1L4B6</accession>
<accession>Q8N832</accession>
<accession>Q8NDL3</accession>
<sequence length="723" mass="82745">METAMCVCCPCCTWQRCCPQLCSCLCCKFIFTSERNCTCFPCPYKDERNCQFCHCTCSESPNCHWCCCSWANDPNCKCCCTASSNLNCYYYESRCCRNTIITFHKGRLRSIHTSSKTALRTGSSDTQVDEVKSIPANSHLVNHLNCPMCSRLRLHSFMLPCNHSLCEKCLRQLQKHAEVTENFFILICPVCDRSHCMPYSNKMQLPENYLHGRLTKRYMQEHGYLKWRFDRSSGPILCQVCRNKRIAYKRCITCRLNLCNDCLKAFHSDVAMQDHVFVDTSAEEQDEKICIHHPSSRIIEYCRNDNKLLCTFCKFSFHNGHDTISLIDACSERAASLFSAIAKFKAVRYEIDNDLMEFNILKNSFKADKEAKRKEIRNGFLKLRSILQEKEKIIMEQIENLEVSRQKEIEKYVYVTTMKVNEMDGLIAYSKEALKETGQVAFLQSAKILVDQIEDGIQTTYRPDPQLRLHSINYVPLDFVELSSAIHELFPTGPKKVRSSGDSLPSPYPVHSETMIARKVTFSTHSLGNQHIYQRSSSMLSFSNTDKKAKVGLEACGRAQSATPAKPTDGLYTYWSAGADSQSVQNSSSFHNWYSFNDGSVKTPGPIVIYQTLVYPRAAKVYWTCPAEDVDSFEMEFYEVITSPPNNVQMELCGQIRDIMQQNLELHNLTPNTEYVFKVRAINDNGPGQWSDICKVVTPDGHGKNRAKWGLLKNIQSALQKHF</sequence>
<protein>
    <recommendedName>
        <fullName>Tripartite motif-containing protein 42</fullName>
    </recommendedName>
</protein>
<dbReference type="EMBL" id="AF521868">
    <property type="protein sequence ID" value="AAO14945.1"/>
    <property type="molecule type" value="mRNA"/>
</dbReference>
<dbReference type="EMBL" id="AK097416">
    <property type="protein sequence ID" value="BAC05042.1"/>
    <property type="status" value="ALT_SEQ"/>
    <property type="molecule type" value="mRNA"/>
</dbReference>
<dbReference type="EMBL" id="AC026324">
    <property type="status" value="NOT_ANNOTATED_CDS"/>
    <property type="molecule type" value="Genomic_DNA"/>
</dbReference>
<dbReference type="EMBL" id="CH471052">
    <property type="protein sequence ID" value="EAW79015.1"/>
    <property type="molecule type" value="Genomic_DNA"/>
</dbReference>
<dbReference type="EMBL" id="BC130472">
    <property type="protein sequence ID" value="AAI30473.1"/>
    <property type="molecule type" value="mRNA"/>
</dbReference>
<dbReference type="EMBL" id="BC130474">
    <property type="protein sequence ID" value="AAI30475.1"/>
    <property type="molecule type" value="mRNA"/>
</dbReference>
<dbReference type="EMBL" id="AL833848">
    <property type="protein sequence ID" value="CAD38707.1"/>
    <property type="molecule type" value="mRNA"/>
</dbReference>
<dbReference type="CCDS" id="CCDS3113.1">
    <molecule id="Q8IWZ5-1"/>
</dbReference>
<dbReference type="RefSeq" id="NP_689829.3">
    <molecule id="Q8IWZ5-1"/>
    <property type="nucleotide sequence ID" value="NM_152616.4"/>
</dbReference>
<dbReference type="SMR" id="Q8IWZ5"/>
<dbReference type="BioGRID" id="130425">
    <property type="interactions" value="150"/>
</dbReference>
<dbReference type="FunCoup" id="Q8IWZ5">
    <property type="interactions" value="62"/>
</dbReference>
<dbReference type="IntAct" id="Q8IWZ5">
    <property type="interactions" value="143"/>
</dbReference>
<dbReference type="STRING" id="9606.ENSP00000286349"/>
<dbReference type="GlyGen" id="Q8IWZ5">
    <property type="glycosylation" value="1 site"/>
</dbReference>
<dbReference type="iPTMnet" id="Q8IWZ5"/>
<dbReference type="PhosphoSitePlus" id="Q8IWZ5"/>
<dbReference type="BioMuta" id="TRIM42"/>
<dbReference type="DMDM" id="296452851"/>
<dbReference type="MassIVE" id="Q8IWZ5"/>
<dbReference type="PaxDb" id="9606-ENSP00000286349"/>
<dbReference type="PeptideAtlas" id="Q8IWZ5"/>
<dbReference type="ProteomicsDB" id="70941">
    <molecule id="Q8IWZ5-1"/>
</dbReference>
<dbReference type="ProteomicsDB" id="70942">
    <molecule id="Q8IWZ5-2"/>
</dbReference>
<dbReference type="Antibodypedia" id="1220">
    <property type="antibodies" value="82 antibodies from 15 providers"/>
</dbReference>
<dbReference type="DNASU" id="287015"/>
<dbReference type="Ensembl" id="ENST00000286349.4">
    <molecule id="Q8IWZ5-1"/>
    <property type="protein sequence ID" value="ENSP00000286349.3"/>
    <property type="gene ID" value="ENSG00000155890.4"/>
</dbReference>
<dbReference type="GeneID" id="287015"/>
<dbReference type="KEGG" id="hsa:287015"/>
<dbReference type="MANE-Select" id="ENST00000286349.4">
    <property type="protein sequence ID" value="ENSP00000286349.3"/>
    <property type="RefSeq nucleotide sequence ID" value="NM_152616.5"/>
    <property type="RefSeq protein sequence ID" value="NP_689829.3"/>
</dbReference>
<dbReference type="UCSC" id="uc003eto.3">
    <molecule id="Q8IWZ5-1"/>
    <property type="organism name" value="human"/>
</dbReference>
<dbReference type="AGR" id="HGNC:19014"/>
<dbReference type="CTD" id="287015"/>
<dbReference type="DisGeNET" id="287015"/>
<dbReference type="GeneCards" id="TRIM42"/>
<dbReference type="HGNC" id="HGNC:19014">
    <property type="gene designation" value="TRIM42"/>
</dbReference>
<dbReference type="HPA" id="ENSG00000155890">
    <property type="expression patterns" value="Tissue enriched (testis)"/>
</dbReference>
<dbReference type="MIM" id="620334">
    <property type="type" value="gene"/>
</dbReference>
<dbReference type="neXtProt" id="NX_Q8IWZ5"/>
<dbReference type="OpenTargets" id="ENSG00000155890"/>
<dbReference type="PharmGKB" id="PA134894780"/>
<dbReference type="VEuPathDB" id="HostDB:ENSG00000155890"/>
<dbReference type="eggNOG" id="KOG2177">
    <property type="taxonomic scope" value="Eukaryota"/>
</dbReference>
<dbReference type="GeneTree" id="ENSGT00530000064220"/>
<dbReference type="HOGENOM" id="CLU_023245_0_0_1"/>
<dbReference type="InParanoid" id="Q8IWZ5"/>
<dbReference type="OMA" id="FGNQQIY"/>
<dbReference type="OrthoDB" id="5800423at2759"/>
<dbReference type="PAN-GO" id="Q8IWZ5">
    <property type="GO annotations" value="0 GO annotations based on evolutionary models"/>
</dbReference>
<dbReference type="PhylomeDB" id="Q8IWZ5"/>
<dbReference type="TreeFam" id="TF336556"/>
<dbReference type="PathwayCommons" id="Q8IWZ5"/>
<dbReference type="SignaLink" id="Q8IWZ5"/>
<dbReference type="SIGNOR" id="Q8IWZ5"/>
<dbReference type="BioGRID-ORCS" id="287015">
    <property type="hits" value="10 hits in 1181 CRISPR screens"/>
</dbReference>
<dbReference type="GenomeRNAi" id="287015"/>
<dbReference type="Pharos" id="Q8IWZ5">
    <property type="development level" value="Tdark"/>
</dbReference>
<dbReference type="PRO" id="PR:Q8IWZ5"/>
<dbReference type="Proteomes" id="UP000005640">
    <property type="component" value="Chromosome 3"/>
</dbReference>
<dbReference type="RNAct" id="Q8IWZ5">
    <property type="molecule type" value="protein"/>
</dbReference>
<dbReference type="Bgee" id="ENSG00000155890">
    <property type="expression patterns" value="Expressed in male germ line stem cell (sensu Vertebrata) in testis and 17 other cell types or tissues"/>
</dbReference>
<dbReference type="GO" id="GO:0061630">
    <property type="term" value="F:ubiquitin protein ligase activity"/>
    <property type="evidence" value="ECO:0007669"/>
    <property type="project" value="UniProtKB-ARBA"/>
</dbReference>
<dbReference type="GO" id="GO:0008270">
    <property type="term" value="F:zinc ion binding"/>
    <property type="evidence" value="ECO:0007669"/>
    <property type="project" value="UniProtKB-KW"/>
</dbReference>
<dbReference type="GO" id="GO:0016567">
    <property type="term" value="P:protein ubiquitination"/>
    <property type="evidence" value="ECO:0007669"/>
    <property type="project" value="UniProtKB-ARBA"/>
</dbReference>
<dbReference type="CDD" id="cd19782">
    <property type="entry name" value="Bbox2_TRIM42_C-III"/>
    <property type="match status" value="1"/>
</dbReference>
<dbReference type="CDD" id="cd00063">
    <property type="entry name" value="FN3"/>
    <property type="match status" value="1"/>
</dbReference>
<dbReference type="CDD" id="cd16578">
    <property type="entry name" value="RING-HC_TRIM42_C-III"/>
    <property type="match status" value="1"/>
</dbReference>
<dbReference type="Gene3D" id="4.10.830.40">
    <property type="match status" value="1"/>
</dbReference>
<dbReference type="Gene3D" id="3.30.160.60">
    <property type="entry name" value="Classic Zinc Finger"/>
    <property type="match status" value="1"/>
</dbReference>
<dbReference type="Gene3D" id="2.60.40.10">
    <property type="entry name" value="Immunoglobulins"/>
    <property type="match status" value="1"/>
</dbReference>
<dbReference type="InterPro" id="IPR017903">
    <property type="entry name" value="COS_domain"/>
</dbReference>
<dbReference type="InterPro" id="IPR051051">
    <property type="entry name" value="E3_ubiq-ligase_TRIM/RNF"/>
</dbReference>
<dbReference type="InterPro" id="IPR003961">
    <property type="entry name" value="FN3_dom"/>
</dbReference>
<dbReference type="InterPro" id="IPR036116">
    <property type="entry name" value="FN3_sf"/>
</dbReference>
<dbReference type="InterPro" id="IPR013783">
    <property type="entry name" value="Ig-like_fold"/>
</dbReference>
<dbReference type="InterPro" id="IPR042765">
    <property type="entry name" value="TRIM42_RING-HC"/>
</dbReference>
<dbReference type="InterPro" id="IPR000315">
    <property type="entry name" value="Znf_B-box"/>
</dbReference>
<dbReference type="InterPro" id="IPR001841">
    <property type="entry name" value="Znf_RING"/>
</dbReference>
<dbReference type="InterPro" id="IPR017907">
    <property type="entry name" value="Znf_RING_CS"/>
</dbReference>
<dbReference type="PANTHER" id="PTHR25465">
    <property type="entry name" value="B-BOX DOMAIN CONTAINING"/>
    <property type="match status" value="1"/>
</dbReference>
<dbReference type="PANTHER" id="PTHR25465:SF13">
    <property type="entry name" value="TRIPARTITE MOTIF-CONTAINING PROTEIN 42"/>
    <property type="match status" value="1"/>
</dbReference>
<dbReference type="Pfam" id="PF00041">
    <property type="entry name" value="fn3"/>
    <property type="match status" value="1"/>
</dbReference>
<dbReference type="Pfam" id="PF00643">
    <property type="entry name" value="zf-B_box"/>
    <property type="match status" value="1"/>
</dbReference>
<dbReference type="SMART" id="SM00336">
    <property type="entry name" value="BBOX"/>
    <property type="match status" value="2"/>
</dbReference>
<dbReference type="SMART" id="SM00060">
    <property type="entry name" value="FN3"/>
    <property type="match status" value="1"/>
</dbReference>
<dbReference type="SUPFAM" id="SSF57845">
    <property type="entry name" value="B-box zinc-binding domain"/>
    <property type="match status" value="1"/>
</dbReference>
<dbReference type="SUPFAM" id="SSF49265">
    <property type="entry name" value="Fibronectin type III"/>
    <property type="match status" value="1"/>
</dbReference>
<dbReference type="SUPFAM" id="SSF57850">
    <property type="entry name" value="RING/U-box"/>
    <property type="match status" value="1"/>
</dbReference>
<dbReference type="PROSITE" id="PS51262">
    <property type="entry name" value="COS"/>
    <property type="match status" value="1"/>
</dbReference>
<dbReference type="PROSITE" id="PS50853">
    <property type="entry name" value="FN3"/>
    <property type="match status" value="1"/>
</dbReference>
<dbReference type="PROSITE" id="PS50119">
    <property type="entry name" value="ZF_BBOX"/>
    <property type="match status" value="1"/>
</dbReference>
<dbReference type="PROSITE" id="PS00518">
    <property type="entry name" value="ZF_RING_1"/>
    <property type="match status" value="1"/>
</dbReference>
<dbReference type="PROSITE" id="PS50089">
    <property type="entry name" value="ZF_RING_2"/>
    <property type="match status" value="1"/>
</dbReference>
<feature type="chain" id="PRO_0000056263" description="Tripartite motif-containing protein 42">
    <location>
        <begin position="1"/>
        <end position="723"/>
    </location>
</feature>
<feature type="domain" description="COS" evidence="5">
    <location>
        <begin position="434"/>
        <end position="492"/>
    </location>
</feature>
<feature type="domain" description="Fibronectin type-III" evidence="4">
    <location>
        <begin position="603"/>
        <end position="701"/>
    </location>
</feature>
<feature type="zinc finger region" description="RING-type" evidence="3">
    <location>
        <begin position="146"/>
        <end position="192"/>
    </location>
</feature>
<feature type="zinc finger region" description="B box-type 1" evidence="2">
    <location>
        <begin position="235"/>
        <end position="280"/>
    </location>
</feature>
<feature type="zinc finger region" description="B box-type 2" evidence="2">
    <location>
        <begin position="285"/>
        <end position="326"/>
    </location>
</feature>
<feature type="coiled-coil region" evidence="1">
    <location>
        <begin position="382"/>
        <end position="407"/>
    </location>
</feature>
<feature type="binding site" evidence="2">
    <location>
        <position position="290"/>
    </location>
    <ligand>
        <name>Zn(2+)</name>
        <dbReference type="ChEBI" id="CHEBI:29105"/>
    </ligand>
</feature>
<feature type="binding site" evidence="2">
    <location>
        <position position="293"/>
    </location>
    <ligand>
        <name>Zn(2+)</name>
        <dbReference type="ChEBI" id="CHEBI:29105"/>
    </ligand>
</feature>
<feature type="binding site" evidence="2">
    <location>
        <position position="313"/>
    </location>
    <ligand>
        <name>Zn(2+)</name>
        <dbReference type="ChEBI" id="CHEBI:29105"/>
    </ligand>
</feature>
<feature type="binding site" evidence="2">
    <location>
        <position position="318"/>
    </location>
    <ligand>
        <name>Zn(2+)</name>
        <dbReference type="ChEBI" id="CHEBI:29105"/>
    </ligand>
</feature>
<feature type="splice variant" id="VSP_012066" description="In isoform 2." evidence="11">
    <original>VRYEIDNDLMEFNILKNSFKADK</original>
    <variation>GPPLFHSFSLTSSSGTHGEDGVG</variation>
    <location>
        <begin position="347"/>
        <end position="369"/>
    </location>
</feature>
<feature type="splice variant" id="VSP_012067" description="In isoform 2." evidence="11">
    <location>
        <begin position="370"/>
        <end position="723"/>
    </location>
</feature>
<feature type="sequence variant" id="VAR_052143" description="In dbSNP:rs698673." evidence="6 7 8 9 10">
    <original>K</original>
    <variation>R</variation>
    <location>
        <position position="244"/>
    </location>
</feature>
<feature type="sequence variant" id="VAR_034468" description="In dbSNP:rs28594654." evidence="8">
    <original>V</original>
    <variation>M</variation>
    <location>
        <position position="475"/>
    </location>
</feature>
<feature type="sequence variant" id="VAR_034469" description="In dbSNP:rs9876490." evidence="8">
    <original>A</original>
    <variation>E</variation>
    <location>
        <position position="579"/>
    </location>
</feature>
<feature type="sequence conflict" description="In Ref. 2; BAC05042." evidence="11" ref="2">
    <original>I</original>
    <variation>T</variation>
    <location>
        <position position="516"/>
    </location>
</feature>
<keyword id="KW-0025">Alternative splicing</keyword>
<keyword id="KW-0175">Coiled coil</keyword>
<keyword id="KW-0479">Metal-binding</keyword>
<keyword id="KW-1267">Proteomics identification</keyword>
<keyword id="KW-1185">Reference proteome</keyword>
<keyword id="KW-0677">Repeat</keyword>
<keyword id="KW-0862">Zinc</keyword>
<keyword id="KW-0863">Zinc-finger</keyword>
<name>TRI42_HUMAN</name>
<evidence type="ECO:0000255" key="1"/>
<evidence type="ECO:0000255" key="2">
    <source>
        <dbReference type="PROSITE-ProRule" id="PRU00024"/>
    </source>
</evidence>
<evidence type="ECO:0000255" key="3">
    <source>
        <dbReference type="PROSITE-ProRule" id="PRU00175"/>
    </source>
</evidence>
<evidence type="ECO:0000255" key="4">
    <source>
        <dbReference type="PROSITE-ProRule" id="PRU00316"/>
    </source>
</evidence>
<evidence type="ECO:0000255" key="5">
    <source>
        <dbReference type="PROSITE-ProRule" id="PRU00586"/>
    </source>
</evidence>
<evidence type="ECO:0000269" key="6">
    <source>
    </source>
</evidence>
<evidence type="ECO:0000269" key="7">
    <source>
    </source>
</evidence>
<evidence type="ECO:0000269" key="8">
    <source>
    </source>
</evidence>
<evidence type="ECO:0000269" key="9">
    <source ref="1"/>
</evidence>
<evidence type="ECO:0000269" key="10">
    <source ref="4"/>
</evidence>
<evidence type="ECO:0000305" key="11"/>
<gene>
    <name type="primary">TRIM42</name>
</gene>
<organism>
    <name type="scientific">Homo sapiens</name>
    <name type="common">Human</name>
    <dbReference type="NCBI Taxonomy" id="9606"/>
    <lineage>
        <taxon>Eukaryota</taxon>
        <taxon>Metazoa</taxon>
        <taxon>Chordata</taxon>
        <taxon>Craniata</taxon>
        <taxon>Vertebrata</taxon>
        <taxon>Euteleostomi</taxon>
        <taxon>Mammalia</taxon>
        <taxon>Eutheria</taxon>
        <taxon>Euarchontoglires</taxon>
        <taxon>Primates</taxon>
        <taxon>Haplorrhini</taxon>
        <taxon>Catarrhini</taxon>
        <taxon>Hominidae</taxon>
        <taxon>Homo</taxon>
    </lineage>
</organism>
<reference key="1">
    <citation type="submission" date="2002-06" db="EMBL/GenBank/DDBJ databases">
        <title>Novel tripartite motif family members.</title>
        <authorList>
            <person name="Meroni G."/>
        </authorList>
    </citation>
    <scope>NUCLEOTIDE SEQUENCE [MRNA] (ISOFORM 1)</scope>
    <scope>VARIANT ARG-244</scope>
</reference>
<reference key="2">
    <citation type="journal article" date="2004" name="Nat. Genet.">
        <title>Complete sequencing and characterization of 21,243 full-length human cDNAs.</title>
        <authorList>
            <person name="Ota T."/>
            <person name="Suzuki Y."/>
            <person name="Nishikawa T."/>
            <person name="Otsuki T."/>
            <person name="Sugiyama T."/>
            <person name="Irie R."/>
            <person name="Wakamatsu A."/>
            <person name="Hayashi K."/>
            <person name="Sato H."/>
            <person name="Nagai K."/>
            <person name="Kimura K."/>
            <person name="Makita H."/>
            <person name="Sekine M."/>
            <person name="Obayashi M."/>
            <person name="Nishi T."/>
            <person name="Shibahara T."/>
            <person name="Tanaka T."/>
            <person name="Ishii S."/>
            <person name="Yamamoto J."/>
            <person name="Saito K."/>
            <person name="Kawai Y."/>
            <person name="Isono Y."/>
            <person name="Nakamura Y."/>
            <person name="Nagahari K."/>
            <person name="Murakami K."/>
            <person name="Yasuda T."/>
            <person name="Iwayanagi T."/>
            <person name="Wagatsuma M."/>
            <person name="Shiratori A."/>
            <person name="Sudo H."/>
            <person name="Hosoiri T."/>
            <person name="Kaku Y."/>
            <person name="Kodaira H."/>
            <person name="Kondo H."/>
            <person name="Sugawara M."/>
            <person name="Takahashi M."/>
            <person name="Kanda K."/>
            <person name="Yokoi T."/>
            <person name="Furuya T."/>
            <person name="Kikkawa E."/>
            <person name="Omura Y."/>
            <person name="Abe K."/>
            <person name="Kamihara K."/>
            <person name="Katsuta N."/>
            <person name="Sato K."/>
            <person name="Tanikawa M."/>
            <person name="Yamazaki M."/>
            <person name="Ninomiya K."/>
            <person name="Ishibashi T."/>
            <person name="Yamashita H."/>
            <person name="Murakawa K."/>
            <person name="Fujimori K."/>
            <person name="Tanai H."/>
            <person name="Kimata M."/>
            <person name="Watanabe M."/>
            <person name="Hiraoka S."/>
            <person name="Chiba Y."/>
            <person name="Ishida S."/>
            <person name="Ono Y."/>
            <person name="Takiguchi S."/>
            <person name="Watanabe S."/>
            <person name="Yosida M."/>
            <person name="Hotuta T."/>
            <person name="Kusano J."/>
            <person name="Kanehori K."/>
            <person name="Takahashi-Fujii A."/>
            <person name="Hara H."/>
            <person name="Tanase T.-O."/>
            <person name="Nomura Y."/>
            <person name="Togiya S."/>
            <person name="Komai F."/>
            <person name="Hara R."/>
            <person name="Takeuchi K."/>
            <person name="Arita M."/>
            <person name="Imose N."/>
            <person name="Musashino K."/>
            <person name="Yuuki H."/>
            <person name="Oshima A."/>
            <person name="Sasaki N."/>
            <person name="Aotsuka S."/>
            <person name="Yoshikawa Y."/>
            <person name="Matsunawa H."/>
            <person name="Ichihara T."/>
            <person name="Shiohata N."/>
            <person name="Sano S."/>
            <person name="Moriya S."/>
            <person name="Momiyama H."/>
            <person name="Satoh N."/>
            <person name="Takami S."/>
            <person name="Terashima Y."/>
            <person name="Suzuki O."/>
            <person name="Nakagawa S."/>
            <person name="Senoh A."/>
            <person name="Mizoguchi H."/>
            <person name="Goto Y."/>
            <person name="Shimizu F."/>
            <person name="Wakebe H."/>
            <person name="Hishigaki H."/>
            <person name="Watanabe T."/>
            <person name="Sugiyama A."/>
            <person name="Takemoto M."/>
            <person name="Kawakami B."/>
            <person name="Yamazaki M."/>
            <person name="Watanabe K."/>
            <person name="Kumagai A."/>
            <person name="Itakura S."/>
            <person name="Fukuzumi Y."/>
            <person name="Fujimori Y."/>
            <person name="Komiyama M."/>
            <person name="Tashiro H."/>
            <person name="Tanigami A."/>
            <person name="Fujiwara T."/>
            <person name="Ono T."/>
            <person name="Yamada K."/>
            <person name="Fujii Y."/>
            <person name="Ozaki K."/>
            <person name="Hirao M."/>
            <person name="Ohmori Y."/>
            <person name="Kawabata A."/>
            <person name="Hikiji T."/>
            <person name="Kobatake N."/>
            <person name="Inagaki H."/>
            <person name="Ikema Y."/>
            <person name="Okamoto S."/>
            <person name="Okitani R."/>
            <person name="Kawakami T."/>
            <person name="Noguchi S."/>
            <person name="Itoh T."/>
            <person name="Shigeta K."/>
            <person name="Senba T."/>
            <person name="Matsumura K."/>
            <person name="Nakajima Y."/>
            <person name="Mizuno T."/>
            <person name="Morinaga M."/>
            <person name="Sasaki M."/>
            <person name="Togashi T."/>
            <person name="Oyama M."/>
            <person name="Hata H."/>
            <person name="Watanabe M."/>
            <person name="Komatsu T."/>
            <person name="Mizushima-Sugano J."/>
            <person name="Satoh T."/>
            <person name="Shirai Y."/>
            <person name="Takahashi Y."/>
            <person name="Nakagawa K."/>
            <person name="Okumura K."/>
            <person name="Nagase T."/>
            <person name="Nomura N."/>
            <person name="Kikuchi H."/>
            <person name="Masuho Y."/>
            <person name="Yamashita R."/>
            <person name="Nakai K."/>
            <person name="Yada T."/>
            <person name="Nakamura Y."/>
            <person name="Ohara O."/>
            <person name="Isogai T."/>
            <person name="Sugano S."/>
        </authorList>
    </citation>
    <scope>NUCLEOTIDE SEQUENCE [LARGE SCALE MRNA] (ISOFORM 1)</scope>
    <scope>VARIANT ARG-244</scope>
    <source>
        <tissue>Testis</tissue>
    </source>
</reference>
<reference key="3">
    <citation type="journal article" date="2006" name="Nature">
        <title>The DNA sequence, annotation and analysis of human chromosome 3.</title>
        <authorList>
            <person name="Muzny D.M."/>
            <person name="Scherer S.E."/>
            <person name="Kaul R."/>
            <person name="Wang J."/>
            <person name="Yu J."/>
            <person name="Sudbrak R."/>
            <person name="Buhay C.J."/>
            <person name="Chen R."/>
            <person name="Cree A."/>
            <person name="Ding Y."/>
            <person name="Dugan-Rocha S."/>
            <person name="Gill R."/>
            <person name="Gunaratne P."/>
            <person name="Harris R.A."/>
            <person name="Hawes A.C."/>
            <person name="Hernandez J."/>
            <person name="Hodgson A.V."/>
            <person name="Hume J."/>
            <person name="Jackson A."/>
            <person name="Khan Z.M."/>
            <person name="Kovar-Smith C."/>
            <person name="Lewis L.R."/>
            <person name="Lozado R.J."/>
            <person name="Metzker M.L."/>
            <person name="Milosavljevic A."/>
            <person name="Miner G.R."/>
            <person name="Morgan M.B."/>
            <person name="Nazareth L.V."/>
            <person name="Scott G."/>
            <person name="Sodergren E."/>
            <person name="Song X.-Z."/>
            <person name="Steffen D."/>
            <person name="Wei S."/>
            <person name="Wheeler D.A."/>
            <person name="Wright M.W."/>
            <person name="Worley K.C."/>
            <person name="Yuan Y."/>
            <person name="Zhang Z."/>
            <person name="Adams C.Q."/>
            <person name="Ansari-Lari M.A."/>
            <person name="Ayele M."/>
            <person name="Brown M.J."/>
            <person name="Chen G."/>
            <person name="Chen Z."/>
            <person name="Clendenning J."/>
            <person name="Clerc-Blankenburg K.P."/>
            <person name="Chen R."/>
            <person name="Chen Z."/>
            <person name="Davis C."/>
            <person name="Delgado O."/>
            <person name="Dinh H.H."/>
            <person name="Dong W."/>
            <person name="Draper H."/>
            <person name="Ernst S."/>
            <person name="Fu G."/>
            <person name="Gonzalez-Garay M.L."/>
            <person name="Garcia D.K."/>
            <person name="Gillett W."/>
            <person name="Gu J."/>
            <person name="Hao B."/>
            <person name="Haugen E."/>
            <person name="Havlak P."/>
            <person name="He X."/>
            <person name="Hennig S."/>
            <person name="Hu S."/>
            <person name="Huang W."/>
            <person name="Jackson L.R."/>
            <person name="Jacob L.S."/>
            <person name="Kelly S.H."/>
            <person name="Kube M."/>
            <person name="Levy R."/>
            <person name="Li Z."/>
            <person name="Liu B."/>
            <person name="Liu J."/>
            <person name="Liu W."/>
            <person name="Lu J."/>
            <person name="Maheshwari M."/>
            <person name="Nguyen B.-V."/>
            <person name="Okwuonu G.O."/>
            <person name="Palmeiri A."/>
            <person name="Pasternak S."/>
            <person name="Perez L.M."/>
            <person name="Phelps K.A."/>
            <person name="Plopper F.J."/>
            <person name="Qiang B."/>
            <person name="Raymond C."/>
            <person name="Rodriguez R."/>
            <person name="Saenphimmachak C."/>
            <person name="Santibanez J."/>
            <person name="Shen H."/>
            <person name="Shen Y."/>
            <person name="Subramanian S."/>
            <person name="Tabor P.E."/>
            <person name="Verduzco D."/>
            <person name="Waldron L."/>
            <person name="Wang J."/>
            <person name="Wang J."/>
            <person name="Wang Q."/>
            <person name="Williams G.A."/>
            <person name="Wong G.K.-S."/>
            <person name="Yao Z."/>
            <person name="Zhang J."/>
            <person name="Zhang X."/>
            <person name="Zhao G."/>
            <person name="Zhou J."/>
            <person name="Zhou Y."/>
            <person name="Nelson D."/>
            <person name="Lehrach H."/>
            <person name="Reinhardt R."/>
            <person name="Naylor S.L."/>
            <person name="Yang H."/>
            <person name="Olson M."/>
            <person name="Weinstock G."/>
            <person name="Gibbs R.A."/>
        </authorList>
    </citation>
    <scope>NUCLEOTIDE SEQUENCE [LARGE SCALE GENOMIC DNA]</scope>
</reference>
<reference key="4">
    <citation type="submission" date="2005-09" db="EMBL/GenBank/DDBJ databases">
        <authorList>
            <person name="Mural R.J."/>
            <person name="Istrail S."/>
            <person name="Sutton G.G."/>
            <person name="Florea L."/>
            <person name="Halpern A.L."/>
            <person name="Mobarry C.M."/>
            <person name="Lippert R."/>
            <person name="Walenz B."/>
            <person name="Shatkay H."/>
            <person name="Dew I."/>
            <person name="Miller J.R."/>
            <person name="Flanigan M.J."/>
            <person name="Edwards N.J."/>
            <person name="Bolanos R."/>
            <person name="Fasulo D."/>
            <person name="Halldorsson B.V."/>
            <person name="Hannenhalli S."/>
            <person name="Turner R."/>
            <person name="Yooseph S."/>
            <person name="Lu F."/>
            <person name="Nusskern D.R."/>
            <person name="Shue B.C."/>
            <person name="Zheng X.H."/>
            <person name="Zhong F."/>
            <person name="Delcher A.L."/>
            <person name="Huson D.H."/>
            <person name="Kravitz S.A."/>
            <person name="Mouchard L."/>
            <person name="Reinert K."/>
            <person name="Remington K.A."/>
            <person name="Clark A.G."/>
            <person name="Waterman M.S."/>
            <person name="Eichler E.E."/>
            <person name="Adams M.D."/>
            <person name="Hunkapiller M.W."/>
            <person name="Myers E.W."/>
            <person name="Venter J.C."/>
        </authorList>
    </citation>
    <scope>NUCLEOTIDE SEQUENCE [LARGE SCALE GENOMIC DNA]</scope>
    <scope>VARIANT ARG-244</scope>
</reference>
<reference key="5">
    <citation type="journal article" date="2004" name="Genome Res.">
        <title>The status, quality, and expansion of the NIH full-length cDNA project: the Mammalian Gene Collection (MGC).</title>
        <authorList>
            <consortium name="The MGC Project Team"/>
        </authorList>
    </citation>
    <scope>NUCLEOTIDE SEQUENCE [LARGE SCALE MRNA] (ISOFORM 1)</scope>
    <scope>VARIANT ARG-244</scope>
</reference>
<reference key="6">
    <citation type="journal article" date="2007" name="BMC Genomics">
        <title>The full-ORF clone resource of the German cDNA consortium.</title>
        <authorList>
            <person name="Bechtel S."/>
            <person name="Rosenfelder H."/>
            <person name="Duda A."/>
            <person name="Schmidt C.P."/>
            <person name="Ernst U."/>
            <person name="Wellenreuther R."/>
            <person name="Mehrle A."/>
            <person name="Schuster C."/>
            <person name="Bahr A."/>
            <person name="Bloecker H."/>
            <person name="Heubner D."/>
            <person name="Hoerlein A."/>
            <person name="Michel G."/>
            <person name="Wedler H."/>
            <person name="Koehrer K."/>
            <person name="Ottenwaelder B."/>
            <person name="Poustka A."/>
            <person name="Wiemann S."/>
            <person name="Schupp I."/>
        </authorList>
    </citation>
    <scope>PARTIAL NUCLEOTIDE SEQUENCE [LARGE SCALE MRNA] (ISOFORM 2)</scope>
    <scope>VARIANTS ARG-244; MET-475 AND GLU-579</scope>
    <source>
        <tissue>Testis</tissue>
    </source>
</reference>